<feature type="initiator methionine" description="Removed" evidence="3">
    <location>
        <position position="1"/>
    </location>
</feature>
<feature type="chain" id="PRO_0000127686" description="Guanine nucleotide-binding protein G(I)/G(S)/G(T) subunit beta-1">
    <location>
        <begin position="2"/>
        <end position="340"/>
    </location>
</feature>
<feature type="repeat" description="WD 1" evidence="3">
    <location>
        <begin position="46"/>
        <end position="94"/>
    </location>
</feature>
<feature type="repeat" description="WD 2" evidence="3">
    <location>
        <begin position="95"/>
        <end position="140"/>
    </location>
</feature>
<feature type="repeat" description="WD 3" evidence="3">
    <location>
        <begin position="141"/>
        <end position="181"/>
    </location>
</feature>
<feature type="repeat" description="WD 4" evidence="3">
    <location>
        <begin position="182"/>
        <end position="223"/>
    </location>
</feature>
<feature type="repeat" description="WD 5" evidence="3">
    <location>
        <begin position="224"/>
        <end position="267"/>
    </location>
</feature>
<feature type="repeat" description="WD 6" evidence="3">
    <location>
        <begin position="268"/>
        <end position="309"/>
    </location>
</feature>
<feature type="repeat" description="WD 7" evidence="3">
    <location>
        <begin position="310"/>
        <end position="340"/>
    </location>
</feature>
<feature type="modified residue" description="N-acetylserine" evidence="3">
    <location>
        <position position="2"/>
    </location>
</feature>
<feature type="modified residue" description="Phosphoserine" evidence="3">
    <location>
        <position position="2"/>
    </location>
</feature>
<feature type="modified residue" description="Phosphohistidine" evidence="2">
    <location>
        <position position="266"/>
    </location>
</feature>
<proteinExistence type="evidence at transcript level"/>
<evidence type="ECO:0000250" key="1"/>
<evidence type="ECO:0000250" key="2">
    <source>
        <dbReference type="UniProtKB" id="P62871"/>
    </source>
</evidence>
<evidence type="ECO:0000250" key="3">
    <source>
        <dbReference type="UniProtKB" id="P62873"/>
    </source>
</evidence>
<evidence type="ECO:0000305" key="4"/>
<comment type="function">
    <text>Guanine nucleotide-binding proteins (G proteins) are involved as a modulator or transducer in various transmembrane signaling systems. The beta and gamma chains are required for the GTPase activity, for replacement of GDP by GTP, and for G protein-effector interaction.</text>
</comment>
<comment type="subunit">
    <text evidence="2 3">G proteins are composed of 3 units, alpha, beta and gamma (By similarity). The heterodimer formed by GNB1 and GNG2 interacts with ARHGEF5 (By similarity). The heterodimer formed by GNB1 and GNG2 interacts with GRK2 (By similarity). Forms a complex with GNAO1 and GNG3. Interacts with ARHGEF18 and RASD2 (By similarity). Forms complexes with TAS2R14 and G-proteins; these complexes play a role in the perception of bitterness (By similarity). Component of the TAS2R14-GNAI1 complex, consisting of TAS2R14, GNAI1, GNB1 and GNG2 (By similarity). Component of the TAS2R14-GNAT3 complex, consisting of TAS2R14, GNAT3, GNB1 and GNG2 (By similarity). Component of the TAS2R14-GNAS2 complex, consisting of TAS2R14, GNAS2, GNB1 and GNG2 (By similarity).</text>
</comment>
<comment type="PTM">
    <text evidence="1">Phosphorylation at His-266 by NDKB contributes to G protein activation by increasing the high energetic phosphate transfer onto GDP.</text>
</comment>
<comment type="similarity">
    <text evidence="4">Belongs to the WD repeat G protein beta family.</text>
</comment>
<dbReference type="EMBL" id="AY392427">
    <property type="protein sequence ID" value="AAQ94086.1"/>
    <property type="molecule type" value="mRNA"/>
</dbReference>
<dbReference type="RefSeq" id="NP_001233630.1">
    <property type="nucleotide sequence ID" value="NM_001246701.1"/>
</dbReference>
<dbReference type="BioGRID" id="1614024">
    <property type="interactions" value="1"/>
</dbReference>
<dbReference type="PaxDb" id="10029-NP_001233630.1"/>
<dbReference type="GeneID" id="100689442"/>
<dbReference type="KEGG" id="cge:100689442"/>
<dbReference type="CTD" id="2782"/>
<dbReference type="eggNOG" id="KOG0286">
    <property type="taxonomic scope" value="Eukaryota"/>
</dbReference>
<dbReference type="OrthoDB" id="10255630at2759"/>
<dbReference type="Proteomes" id="UP000694386">
    <property type="component" value="Unplaced"/>
</dbReference>
<dbReference type="Proteomes" id="UP001108280">
    <property type="component" value="Chromosome 2"/>
</dbReference>
<dbReference type="GO" id="GO:0007165">
    <property type="term" value="P:signal transduction"/>
    <property type="evidence" value="ECO:0007669"/>
    <property type="project" value="UniProtKB-KW"/>
</dbReference>
<dbReference type="CDD" id="cd00200">
    <property type="entry name" value="WD40"/>
    <property type="match status" value="1"/>
</dbReference>
<dbReference type="FunFam" id="2.130.10.10:FF:000007">
    <property type="entry name" value="Guanine nucleotide-binding protein G(I)/G(S)/G(T) subunit beta-1"/>
    <property type="match status" value="1"/>
</dbReference>
<dbReference type="Gene3D" id="2.130.10.10">
    <property type="entry name" value="YVTN repeat-like/Quinoprotein amine dehydrogenase"/>
    <property type="match status" value="1"/>
</dbReference>
<dbReference type="InterPro" id="IPR020472">
    <property type="entry name" value="G-protein_beta_WD-40_rep"/>
</dbReference>
<dbReference type="InterPro" id="IPR001632">
    <property type="entry name" value="Gprotein_B"/>
</dbReference>
<dbReference type="InterPro" id="IPR016346">
    <property type="entry name" value="Guanine_nucleotide-bd_bsu"/>
</dbReference>
<dbReference type="InterPro" id="IPR015943">
    <property type="entry name" value="WD40/YVTN_repeat-like_dom_sf"/>
</dbReference>
<dbReference type="InterPro" id="IPR019775">
    <property type="entry name" value="WD40_repeat_CS"/>
</dbReference>
<dbReference type="InterPro" id="IPR036322">
    <property type="entry name" value="WD40_repeat_dom_sf"/>
</dbReference>
<dbReference type="InterPro" id="IPR001680">
    <property type="entry name" value="WD40_rpt"/>
</dbReference>
<dbReference type="PANTHER" id="PTHR19850">
    <property type="entry name" value="GUANINE NUCLEOTIDE-BINDING PROTEIN BETA G PROTEIN BETA"/>
    <property type="match status" value="1"/>
</dbReference>
<dbReference type="Pfam" id="PF25391">
    <property type="entry name" value="WD40_Gbeta"/>
    <property type="match status" value="1"/>
</dbReference>
<dbReference type="PIRSF" id="PIRSF002394">
    <property type="entry name" value="GN-bd_beta"/>
    <property type="match status" value="1"/>
</dbReference>
<dbReference type="PRINTS" id="PR00319">
    <property type="entry name" value="GPROTEINB"/>
</dbReference>
<dbReference type="PRINTS" id="PR00320">
    <property type="entry name" value="GPROTEINBRPT"/>
</dbReference>
<dbReference type="SMART" id="SM00320">
    <property type="entry name" value="WD40"/>
    <property type="match status" value="7"/>
</dbReference>
<dbReference type="SUPFAM" id="SSF50978">
    <property type="entry name" value="WD40 repeat-like"/>
    <property type="match status" value="1"/>
</dbReference>
<dbReference type="PROSITE" id="PS00678">
    <property type="entry name" value="WD_REPEATS_1"/>
    <property type="match status" value="3"/>
</dbReference>
<dbReference type="PROSITE" id="PS50082">
    <property type="entry name" value="WD_REPEATS_2"/>
    <property type="match status" value="6"/>
</dbReference>
<dbReference type="PROSITE" id="PS50294">
    <property type="entry name" value="WD_REPEATS_REGION"/>
    <property type="match status" value="1"/>
</dbReference>
<gene>
    <name type="primary">GNB1</name>
</gene>
<accession>Q6TMK6</accession>
<keyword id="KW-0007">Acetylation</keyword>
<keyword id="KW-0597">Phosphoprotein</keyword>
<keyword id="KW-0677">Repeat</keyword>
<keyword id="KW-0807">Transducer</keyword>
<keyword id="KW-0853">WD repeat</keyword>
<protein>
    <recommendedName>
        <fullName>Guanine nucleotide-binding protein G(I)/G(S)/G(T) subunit beta-1</fullName>
    </recommendedName>
    <alternativeName>
        <fullName>Transducin beta chain 1</fullName>
    </alternativeName>
</protein>
<reference key="1">
    <citation type="submission" date="2003-09" db="EMBL/GenBank/DDBJ databases">
        <title>Differential display analysis of BCR/ABL-regulated genes.</title>
        <authorList>
            <person name="Guang L."/>
            <person name="Shibuya M."/>
            <person name="Yoshiro M."/>
        </authorList>
    </citation>
    <scope>NUCLEOTIDE SEQUENCE [MRNA]</scope>
</reference>
<name>GBB1_CRIGR</name>
<sequence>MSELDQLRQEAEQLKNQIRDARKACADATLSXITTNIDPVGRIQMRTRRTLRGHLAKIYAMHWGTDSRLLVSASQDGKLIIWDSYTTNKVHAIPLRSSWVMTCAYAPSGNYVACGGLDNICSIYNLKTREGNVRVSRELAGHTGYLSCCRFLNDNQIVTSSEDTTCALWDIETGQQTTTFTGHTGDVMSLSLAPDTRLFVSGACDASAKLWDVREGMCRQTFTGHESDINAICFFPNGNAFATGSDDATCRLFDLRADQELMTYSHDNIICGITSVSFSKSGRLLLAGYDDFNCNVWDALKADRAGVLAGHDNRVSCLGVTDDGMAVATGSWDSFLKIWN</sequence>
<organism>
    <name type="scientific">Cricetulus griseus</name>
    <name type="common">Chinese hamster</name>
    <name type="synonym">Cricetulus barabensis griseus</name>
    <dbReference type="NCBI Taxonomy" id="10029"/>
    <lineage>
        <taxon>Eukaryota</taxon>
        <taxon>Metazoa</taxon>
        <taxon>Chordata</taxon>
        <taxon>Craniata</taxon>
        <taxon>Vertebrata</taxon>
        <taxon>Euteleostomi</taxon>
        <taxon>Mammalia</taxon>
        <taxon>Eutheria</taxon>
        <taxon>Euarchontoglires</taxon>
        <taxon>Glires</taxon>
        <taxon>Rodentia</taxon>
        <taxon>Myomorpha</taxon>
        <taxon>Muroidea</taxon>
        <taxon>Cricetidae</taxon>
        <taxon>Cricetinae</taxon>
        <taxon>Cricetulus</taxon>
    </lineage>
</organism>